<organism>
    <name type="scientific">Streptomyces coelicolor (strain ATCC BAA-471 / A3(2) / M145)</name>
    <dbReference type="NCBI Taxonomy" id="100226"/>
    <lineage>
        <taxon>Bacteria</taxon>
        <taxon>Bacillati</taxon>
        <taxon>Actinomycetota</taxon>
        <taxon>Actinomycetes</taxon>
        <taxon>Kitasatosporales</taxon>
        <taxon>Streptomycetaceae</taxon>
        <taxon>Streptomyces</taxon>
        <taxon>Streptomyces albidoflavus group</taxon>
    </lineage>
</organism>
<gene>
    <name evidence="1" type="primary">rpsP</name>
    <name type="ordered locus">SCO5591</name>
    <name type="ORF">SC2E1.08</name>
</gene>
<proteinExistence type="inferred from homology"/>
<protein>
    <recommendedName>
        <fullName evidence="1">Small ribosomal subunit protein bS16</fullName>
    </recommendedName>
    <alternativeName>
        <fullName evidence="3">30S ribosomal protein S16</fullName>
    </alternativeName>
</protein>
<evidence type="ECO:0000255" key="1">
    <source>
        <dbReference type="HAMAP-Rule" id="MF_00385"/>
    </source>
</evidence>
<evidence type="ECO:0000256" key="2">
    <source>
        <dbReference type="SAM" id="MobiDB-lite"/>
    </source>
</evidence>
<evidence type="ECO:0000305" key="3"/>
<reference key="1">
    <citation type="journal article" date="2002" name="Nature">
        <title>Complete genome sequence of the model actinomycete Streptomyces coelicolor A3(2).</title>
        <authorList>
            <person name="Bentley S.D."/>
            <person name="Chater K.F."/>
            <person name="Cerdeno-Tarraga A.-M."/>
            <person name="Challis G.L."/>
            <person name="Thomson N.R."/>
            <person name="James K.D."/>
            <person name="Harris D.E."/>
            <person name="Quail M.A."/>
            <person name="Kieser H."/>
            <person name="Harper D."/>
            <person name="Bateman A."/>
            <person name="Brown S."/>
            <person name="Chandra G."/>
            <person name="Chen C.W."/>
            <person name="Collins M."/>
            <person name="Cronin A."/>
            <person name="Fraser A."/>
            <person name="Goble A."/>
            <person name="Hidalgo J."/>
            <person name="Hornsby T."/>
            <person name="Howarth S."/>
            <person name="Huang C.-H."/>
            <person name="Kieser T."/>
            <person name="Larke L."/>
            <person name="Murphy L.D."/>
            <person name="Oliver K."/>
            <person name="O'Neil S."/>
            <person name="Rabbinowitsch E."/>
            <person name="Rajandream M.A."/>
            <person name="Rutherford K.M."/>
            <person name="Rutter S."/>
            <person name="Seeger K."/>
            <person name="Saunders D."/>
            <person name="Sharp S."/>
            <person name="Squares R."/>
            <person name="Squares S."/>
            <person name="Taylor K."/>
            <person name="Warren T."/>
            <person name="Wietzorrek A."/>
            <person name="Woodward J.R."/>
            <person name="Barrell B.G."/>
            <person name="Parkhill J."/>
            <person name="Hopwood D.A."/>
        </authorList>
    </citation>
    <scope>NUCLEOTIDE SEQUENCE [LARGE SCALE GENOMIC DNA]</scope>
    <source>
        <strain>ATCC BAA-471 / A3(2) / M145</strain>
    </source>
</reference>
<name>RS16_STRCO</name>
<accession>O69879</accession>
<comment type="similarity">
    <text evidence="1">Belongs to the bacterial ribosomal protein bS16 family.</text>
</comment>
<sequence>MAVKIKLKRLGKIRSPHYRIVVADSRTRRDGRAIEEIGKYHPTYNPSVMEVDAERVAYWLGVGAQPTEPVLAILKKTGDWQKFKGEPAPAPLLQPAEKAARPSFEAIGGEDEGKGEAITQKKKADKKDEAAAESSASEA</sequence>
<keyword id="KW-1185">Reference proteome</keyword>
<keyword id="KW-0687">Ribonucleoprotein</keyword>
<keyword id="KW-0689">Ribosomal protein</keyword>
<dbReference type="EMBL" id="AL939124">
    <property type="protein sequence ID" value="CAA19383.1"/>
    <property type="molecule type" value="Genomic_DNA"/>
</dbReference>
<dbReference type="PIR" id="T34776">
    <property type="entry name" value="T34776"/>
</dbReference>
<dbReference type="RefSeq" id="NP_629725.1">
    <property type="nucleotide sequence ID" value="NC_003888.3"/>
</dbReference>
<dbReference type="RefSeq" id="WP_007444852.1">
    <property type="nucleotide sequence ID" value="NZ_VNID01000034.1"/>
</dbReference>
<dbReference type="SMR" id="O69879"/>
<dbReference type="FunCoup" id="O69879">
    <property type="interactions" value="64"/>
</dbReference>
<dbReference type="STRING" id="100226.gene:17763249"/>
<dbReference type="PaxDb" id="100226-SCO5591"/>
<dbReference type="GeneID" id="97462035"/>
<dbReference type="KEGG" id="sco:SCO5591"/>
<dbReference type="PATRIC" id="fig|100226.15.peg.5683"/>
<dbReference type="eggNOG" id="COG0228">
    <property type="taxonomic scope" value="Bacteria"/>
</dbReference>
<dbReference type="HOGENOM" id="CLU_100590_1_1_11"/>
<dbReference type="InParanoid" id="O69879"/>
<dbReference type="OrthoDB" id="9807878at2"/>
<dbReference type="PhylomeDB" id="O69879"/>
<dbReference type="Proteomes" id="UP000001973">
    <property type="component" value="Chromosome"/>
</dbReference>
<dbReference type="GO" id="GO:0005737">
    <property type="term" value="C:cytoplasm"/>
    <property type="evidence" value="ECO:0007669"/>
    <property type="project" value="UniProtKB-ARBA"/>
</dbReference>
<dbReference type="GO" id="GO:0015935">
    <property type="term" value="C:small ribosomal subunit"/>
    <property type="evidence" value="ECO:0000318"/>
    <property type="project" value="GO_Central"/>
</dbReference>
<dbReference type="GO" id="GO:0003735">
    <property type="term" value="F:structural constituent of ribosome"/>
    <property type="evidence" value="ECO:0000318"/>
    <property type="project" value="GO_Central"/>
</dbReference>
<dbReference type="GO" id="GO:0006412">
    <property type="term" value="P:translation"/>
    <property type="evidence" value="ECO:0007669"/>
    <property type="project" value="UniProtKB-UniRule"/>
</dbReference>
<dbReference type="FunFam" id="3.30.1320.10:FF:000009">
    <property type="entry name" value="30S ribosomal protein S16"/>
    <property type="match status" value="1"/>
</dbReference>
<dbReference type="Gene3D" id="3.30.1320.10">
    <property type="match status" value="1"/>
</dbReference>
<dbReference type="HAMAP" id="MF_00385">
    <property type="entry name" value="Ribosomal_bS16"/>
    <property type="match status" value="1"/>
</dbReference>
<dbReference type="InterPro" id="IPR000307">
    <property type="entry name" value="Ribosomal_bS16"/>
</dbReference>
<dbReference type="InterPro" id="IPR020592">
    <property type="entry name" value="Ribosomal_bS16_CS"/>
</dbReference>
<dbReference type="InterPro" id="IPR023803">
    <property type="entry name" value="Ribosomal_bS16_dom_sf"/>
</dbReference>
<dbReference type="NCBIfam" id="NF011093">
    <property type="entry name" value="PRK14520.1"/>
    <property type="match status" value="1"/>
</dbReference>
<dbReference type="NCBIfam" id="TIGR00002">
    <property type="entry name" value="S16"/>
    <property type="match status" value="1"/>
</dbReference>
<dbReference type="PANTHER" id="PTHR12919">
    <property type="entry name" value="30S RIBOSOMAL PROTEIN S16"/>
    <property type="match status" value="1"/>
</dbReference>
<dbReference type="PANTHER" id="PTHR12919:SF20">
    <property type="entry name" value="SMALL RIBOSOMAL SUBUNIT PROTEIN BS16M"/>
    <property type="match status" value="1"/>
</dbReference>
<dbReference type="Pfam" id="PF00886">
    <property type="entry name" value="Ribosomal_S16"/>
    <property type="match status" value="1"/>
</dbReference>
<dbReference type="SUPFAM" id="SSF54565">
    <property type="entry name" value="Ribosomal protein S16"/>
    <property type="match status" value="1"/>
</dbReference>
<dbReference type="PROSITE" id="PS00732">
    <property type="entry name" value="RIBOSOMAL_S16"/>
    <property type="match status" value="1"/>
</dbReference>
<feature type="chain" id="PRO_0000167254" description="Small ribosomal subunit protein bS16">
    <location>
        <begin position="1"/>
        <end position="139"/>
    </location>
</feature>
<feature type="region of interest" description="Disordered" evidence="2">
    <location>
        <begin position="84"/>
        <end position="139"/>
    </location>
</feature>